<keyword id="KW-0025">Alternative splicing</keyword>
<keyword id="KW-1015">Disulfide bond</keyword>
<keyword id="KW-0325">Glycoprotein</keyword>
<keyword id="KW-0378">Hydrolase</keyword>
<keyword id="KW-0645">Protease</keyword>
<keyword id="KW-1267">Proteomics identification</keyword>
<keyword id="KW-1185">Reference proteome</keyword>
<keyword id="KW-0964">Secreted</keyword>
<keyword id="KW-0720">Serine protease</keyword>
<keyword id="KW-0732">Signal</keyword>
<reference key="1">
    <citation type="journal article" date="1999" name="Anticancer Res.">
        <title>Identification of novel human kallikrein-like genes on chromosome 19q13.3-q13.4.</title>
        <authorList>
            <person name="Yousef G.M."/>
            <person name="Luo L.-Y."/>
            <person name="Diamandis E.P."/>
        </authorList>
    </citation>
    <scope>NUCLEOTIDE SEQUENCE [GENOMIC DNA]</scope>
</reference>
<reference key="2">
    <citation type="journal article" date="2000" name="Genomics">
        <title>The expanded human kallikrein gene family: locus characterization and molecular cloning of a new member, KLK-L3.</title>
        <authorList>
            <person name="Yousef G.M."/>
            <person name="Diamandis E.P."/>
        </authorList>
    </citation>
    <scope>NUCLEOTIDE SEQUENCE [GENOMIC DNA]</scope>
</reference>
<reference key="3">
    <citation type="journal article" date="2000" name="Gene">
        <title>Sequencing and expression analysis of the serine protease gene cluster located in chromosome 19q13 region.</title>
        <authorList>
            <person name="Gan L."/>
            <person name="Lee I."/>
            <person name="Smith R."/>
            <person name="Argonza-Barrett R."/>
            <person name="Lei H."/>
            <person name="McCuaig J."/>
            <person name="Moss P."/>
            <person name="Paeper B."/>
            <person name="Wang K."/>
        </authorList>
    </citation>
    <scope>NUCLEOTIDE SEQUENCE [GENOMIC DNA]</scope>
</reference>
<reference key="4">
    <citation type="submission" date="2004-02" db="EMBL/GenBank/DDBJ databases">
        <title>Cloning of new splice variants of the human kallikrein gene 9.</title>
        <authorList>
            <person name="Kurlender L.E."/>
            <person name="Michael I.P."/>
            <person name="Diamandis E.P."/>
        </authorList>
    </citation>
    <scope>NUCLEOTIDE SEQUENCE [MRNA] (ISOFORM 2)</scope>
    <scope>ALTERNATIVE SPLICING</scope>
</reference>
<reference key="5">
    <citation type="journal article" date="2004" name="Nature">
        <title>The DNA sequence and biology of human chromosome 19.</title>
        <authorList>
            <person name="Grimwood J."/>
            <person name="Gordon L.A."/>
            <person name="Olsen A.S."/>
            <person name="Terry A."/>
            <person name="Schmutz J."/>
            <person name="Lamerdin J.E."/>
            <person name="Hellsten U."/>
            <person name="Goodstein D."/>
            <person name="Couronne O."/>
            <person name="Tran-Gyamfi M."/>
            <person name="Aerts A."/>
            <person name="Altherr M."/>
            <person name="Ashworth L."/>
            <person name="Bajorek E."/>
            <person name="Black S."/>
            <person name="Branscomb E."/>
            <person name="Caenepeel S."/>
            <person name="Carrano A.V."/>
            <person name="Caoile C."/>
            <person name="Chan Y.M."/>
            <person name="Christensen M."/>
            <person name="Cleland C.A."/>
            <person name="Copeland A."/>
            <person name="Dalin E."/>
            <person name="Dehal P."/>
            <person name="Denys M."/>
            <person name="Detter J.C."/>
            <person name="Escobar J."/>
            <person name="Flowers D."/>
            <person name="Fotopulos D."/>
            <person name="Garcia C."/>
            <person name="Georgescu A.M."/>
            <person name="Glavina T."/>
            <person name="Gomez M."/>
            <person name="Gonzales E."/>
            <person name="Groza M."/>
            <person name="Hammon N."/>
            <person name="Hawkins T."/>
            <person name="Haydu L."/>
            <person name="Ho I."/>
            <person name="Huang W."/>
            <person name="Israni S."/>
            <person name="Jett J."/>
            <person name="Kadner K."/>
            <person name="Kimball H."/>
            <person name="Kobayashi A."/>
            <person name="Larionov V."/>
            <person name="Leem S.-H."/>
            <person name="Lopez F."/>
            <person name="Lou Y."/>
            <person name="Lowry S."/>
            <person name="Malfatti S."/>
            <person name="Martinez D."/>
            <person name="McCready P.M."/>
            <person name="Medina C."/>
            <person name="Morgan J."/>
            <person name="Nelson K."/>
            <person name="Nolan M."/>
            <person name="Ovcharenko I."/>
            <person name="Pitluck S."/>
            <person name="Pollard M."/>
            <person name="Popkie A.P."/>
            <person name="Predki P."/>
            <person name="Quan G."/>
            <person name="Ramirez L."/>
            <person name="Rash S."/>
            <person name="Retterer J."/>
            <person name="Rodriguez A."/>
            <person name="Rogers S."/>
            <person name="Salamov A."/>
            <person name="Salazar A."/>
            <person name="She X."/>
            <person name="Smith D."/>
            <person name="Slezak T."/>
            <person name="Solovyev V."/>
            <person name="Thayer N."/>
            <person name="Tice H."/>
            <person name="Tsai M."/>
            <person name="Ustaszewska A."/>
            <person name="Vo N."/>
            <person name="Wagner M."/>
            <person name="Wheeler J."/>
            <person name="Wu K."/>
            <person name="Xie G."/>
            <person name="Yang J."/>
            <person name="Dubchak I."/>
            <person name="Furey T.S."/>
            <person name="DeJong P."/>
            <person name="Dickson M."/>
            <person name="Gordon D."/>
            <person name="Eichler E.E."/>
            <person name="Pennacchio L.A."/>
            <person name="Richardson P."/>
            <person name="Stubbs L."/>
            <person name="Rokhsar D.S."/>
            <person name="Myers R.M."/>
            <person name="Rubin E.M."/>
            <person name="Lucas S.M."/>
        </authorList>
    </citation>
    <scope>NUCLEOTIDE SEQUENCE [LARGE SCALE GENOMIC DNA]</scope>
</reference>
<dbReference type="EC" id="3.4.21.-"/>
<dbReference type="EMBL" id="AF135026">
    <property type="protein sequence ID" value="AAD26427.2"/>
    <property type="molecule type" value="Genomic_DNA"/>
</dbReference>
<dbReference type="EMBL" id="AF243527">
    <property type="protein sequence ID" value="AAG33362.1"/>
    <property type="molecule type" value="Genomic_DNA"/>
</dbReference>
<dbReference type="EMBL" id="AY551001">
    <property type="protein sequence ID" value="AAS55655.1"/>
    <property type="molecule type" value="mRNA"/>
</dbReference>
<dbReference type="EMBL" id="AC011473">
    <property type="protein sequence ID" value="AAG23255.1"/>
    <property type="molecule type" value="Genomic_DNA"/>
</dbReference>
<dbReference type="EMBL" id="AC011483">
    <property type="status" value="NOT_ANNOTATED_CDS"/>
    <property type="molecule type" value="Genomic_DNA"/>
</dbReference>
<dbReference type="CCDS" id="CCDS12816.1">
    <molecule id="Q9UKQ9-1"/>
</dbReference>
<dbReference type="RefSeq" id="NP_036447.1">
    <molecule id="Q9UKQ9-1"/>
    <property type="nucleotide sequence ID" value="NM_012315.2"/>
</dbReference>
<dbReference type="SMR" id="Q9UKQ9"/>
<dbReference type="BioGRID" id="129846">
    <property type="interactions" value="194"/>
</dbReference>
<dbReference type="FunCoup" id="Q9UKQ9">
    <property type="interactions" value="61"/>
</dbReference>
<dbReference type="IntAct" id="Q9UKQ9">
    <property type="interactions" value="17"/>
</dbReference>
<dbReference type="MINT" id="Q9UKQ9"/>
<dbReference type="STRING" id="9606.ENSP00000469417"/>
<dbReference type="MEROPS" id="S01.307"/>
<dbReference type="GlyCosmos" id="Q9UKQ9">
    <property type="glycosylation" value="3 sites, No reported glycans"/>
</dbReference>
<dbReference type="GlyGen" id="Q9UKQ9">
    <property type="glycosylation" value="3 sites"/>
</dbReference>
<dbReference type="iPTMnet" id="Q9UKQ9"/>
<dbReference type="PhosphoSitePlus" id="Q9UKQ9"/>
<dbReference type="BioMuta" id="KLK9"/>
<dbReference type="DMDM" id="9296988"/>
<dbReference type="MassIVE" id="Q9UKQ9"/>
<dbReference type="PaxDb" id="9606-ENSP00000469417"/>
<dbReference type="PeptideAtlas" id="Q9UKQ9"/>
<dbReference type="ProteomicsDB" id="67280"/>
<dbReference type="ProteomicsDB" id="84836">
    <molecule id="Q9UKQ9-1"/>
</dbReference>
<dbReference type="Pumba" id="Q9UKQ9"/>
<dbReference type="Antibodypedia" id="18949">
    <property type="antibodies" value="176 antibodies from 23 providers"/>
</dbReference>
<dbReference type="DNASU" id="284366"/>
<dbReference type="Ensembl" id="ENST00000544410.1">
    <molecule id="Q9UKQ9-2"/>
    <property type="protein sequence ID" value="ENSP00000443289.1"/>
    <property type="gene ID" value="ENSG00000213022.6"/>
</dbReference>
<dbReference type="Ensembl" id="ENST00000594211.2">
    <molecule id="Q9UKQ9-1"/>
    <property type="protein sequence ID" value="ENSP00000469417.1"/>
    <property type="gene ID" value="ENSG00000213022.6"/>
</dbReference>
<dbReference type="GeneID" id="284366"/>
<dbReference type="KEGG" id="hsa:284366"/>
<dbReference type="MANE-Select" id="ENST00000594211.2">
    <property type="protein sequence ID" value="ENSP00000469417.1"/>
    <property type="RefSeq nucleotide sequence ID" value="NM_012315.2"/>
    <property type="RefSeq protein sequence ID" value="NP_036447.1"/>
</dbReference>
<dbReference type="UCSC" id="uc002pux.2">
    <molecule id="Q9UKQ9-1"/>
    <property type="organism name" value="human"/>
</dbReference>
<dbReference type="AGR" id="HGNC:6370"/>
<dbReference type="CTD" id="284366"/>
<dbReference type="DisGeNET" id="284366"/>
<dbReference type="GeneCards" id="KLK9"/>
<dbReference type="HGNC" id="HGNC:6370">
    <property type="gene designation" value="KLK9"/>
</dbReference>
<dbReference type="HPA" id="ENSG00000213022">
    <property type="expression patterns" value="Tissue enriched (skin)"/>
</dbReference>
<dbReference type="MIM" id="605504">
    <property type="type" value="gene"/>
</dbReference>
<dbReference type="neXtProt" id="NX_Q9UKQ9"/>
<dbReference type="OpenTargets" id="ENSG00000213022"/>
<dbReference type="OpenTargets" id="ENSG00000269741"/>
<dbReference type="PharmGKB" id="PA30159"/>
<dbReference type="VEuPathDB" id="HostDB:ENSG00000213022"/>
<dbReference type="eggNOG" id="KOG3627">
    <property type="taxonomic scope" value="Eukaryota"/>
</dbReference>
<dbReference type="GeneTree" id="ENSGT00940000162323"/>
<dbReference type="HOGENOM" id="CLU_006842_1_1_1"/>
<dbReference type="InParanoid" id="Q9UKQ9"/>
<dbReference type="OMA" id="LCRWAYP"/>
<dbReference type="OrthoDB" id="10059102at2759"/>
<dbReference type="PAN-GO" id="Q9UKQ9">
    <property type="GO annotations" value="1 GO annotation based on evolutionary models"/>
</dbReference>
<dbReference type="PhylomeDB" id="Q9UKQ9"/>
<dbReference type="TreeFam" id="TF331065"/>
<dbReference type="BRENDA" id="3.4.21.B40">
    <property type="organism ID" value="2681"/>
</dbReference>
<dbReference type="PathwayCommons" id="Q9UKQ9"/>
<dbReference type="SignaLink" id="Q9UKQ9"/>
<dbReference type="BioGRID-ORCS" id="284366">
    <property type="hits" value="10 hits in 1144 CRISPR screens"/>
</dbReference>
<dbReference type="ChiTaRS" id="KLK9">
    <property type="organism name" value="human"/>
</dbReference>
<dbReference type="GeneWiki" id="KLK9"/>
<dbReference type="GenomeRNAi" id="284366"/>
<dbReference type="Pharos" id="Q9UKQ9">
    <property type="development level" value="Tbio"/>
</dbReference>
<dbReference type="PRO" id="PR:Q9UKQ9"/>
<dbReference type="Proteomes" id="UP000005640">
    <property type="component" value="Chromosome 19"/>
</dbReference>
<dbReference type="RNAct" id="Q9UKQ9">
    <property type="molecule type" value="protein"/>
</dbReference>
<dbReference type="Bgee" id="ENSG00000213022">
    <property type="expression patterns" value="Expressed in skin of leg and 27 other cell types or tissues"/>
</dbReference>
<dbReference type="ExpressionAtlas" id="Q9UKQ9">
    <property type="expression patterns" value="baseline and differential"/>
</dbReference>
<dbReference type="GO" id="GO:0005615">
    <property type="term" value="C:extracellular space"/>
    <property type="evidence" value="ECO:0000318"/>
    <property type="project" value="GO_Central"/>
</dbReference>
<dbReference type="GO" id="GO:0030141">
    <property type="term" value="C:secretory granule"/>
    <property type="evidence" value="ECO:0000318"/>
    <property type="project" value="GO_Central"/>
</dbReference>
<dbReference type="GO" id="GO:0004252">
    <property type="term" value="F:serine-type endopeptidase activity"/>
    <property type="evidence" value="ECO:0000318"/>
    <property type="project" value="GO_Central"/>
</dbReference>
<dbReference type="GO" id="GO:0051604">
    <property type="term" value="P:protein maturation"/>
    <property type="evidence" value="ECO:0000318"/>
    <property type="project" value="GO_Central"/>
</dbReference>
<dbReference type="GO" id="GO:0006508">
    <property type="term" value="P:proteolysis"/>
    <property type="evidence" value="ECO:0007669"/>
    <property type="project" value="UniProtKB-KW"/>
</dbReference>
<dbReference type="CDD" id="cd00190">
    <property type="entry name" value="Tryp_SPc"/>
    <property type="match status" value="1"/>
</dbReference>
<dbReference type="FunFam" id="2.40.10.10:FF:000021">
    <property type="entry name" value="Kallikrein 1"/>
    <property type="match status" value="1"/>
</dbReference>
<dbReference type="FunFam" id="2.40.10.10:FF:000010">
    <property type="entry name" value="Kallikrein related peptidase 11"/>
    <property type="match status" value="1"/>
</dbReference>
<dbReference type="Gene3D" id="2.40.10.10">
    <property type="entry name" value="Trypsin-like serine proteases"/>
    <property type="match status" value="2"/>
</dbReference>
<dbReference type="InterPro" id="IPR009003">
    <property type="entry name" value="Peptidase_S1_PA"/>
</dbReference>
<dbReference type="InterPro" id="IPR043504">
    <property type="entry name" value="Peptidase_S1_PA_chymotrypsin"/>
</dbReference>
<dbReference type="InterPro" id="IPR001314">
    <property type="entry name" value="Peptidase_S1A"/>
</dbReference>
<dbReference type="InterPro" id="IPR001254">
    <property type="entry name" value="Trypsin_dom"/>
</dbReference>
<dbReference type="InterPro" id="IPR018114">
    <property type="entry name" value="TRYPSIN_HIS"/>
</dbReference>
<dbReference type="InterPro" id="IPR033116">
    <property type="entry name" value="TRYPSIN_SER"/>
</dbReference>
<dbReference type="PANTHER" id="PTHR24271:SF57">
    <property type="entry name" value="KALLIKREIN-9"/>
    <property type="match status" value="1"/>
</dbReference>
<dbReference type="PANTHER" id="PTHR24271">
    <property type="entry name" value="KALLIKREIN-RELATED"/>
    <property type="match status" value="1"/>
</dbReference>
<dbReference type="Pfam" id="PF00089">
    <property type="entry name" value="Trypsin"/>
    <property type="match status" value="1"/>
</dbReference>
<dbReference type="PRINTS" id="PR00722">
    <property type="entry name" value="CHYMOTRYPSIN"/>
</dbReference>
<dbReference type="SMART" id="SM00020">
    <property type="entry name" value="Tryp_SPc"/>
    <property type="match status" value="1"/>
</dbReference>
<dbReference type="SUPFAM" id="SSF50494">
    <property type="entry name" value="Trypsin-like serine proteases"/>
    <property type="match status" value="1"/>
</dbReference>
<dbReference type="PROSITE" id="PS50240">
    <property type="entry name" value="TRYPSIN_DOM"/>
    <property type="match status" value="1"/>
</dbReference>
<dbReference type="PROSITE" id="PS00134">
    <property type="entry name" value="TRYPSIN_HIS"/>
    <property type="match status" value="1"/>
</dbReference>
<dbReference type="PROSITE" id="PS00135">
    <property type="entry name" value="TRYPSIN_SER"/>
    <property type="match status" value="1"/>
</dbReference>
<name>KLK9_HUMAN</name>
<accession>Q9UKQ9</accession>
<accession>Q6QA55</accession>
<protein>
    <recommendedName>
        <fullName>Kallikrein-9</fullName>
        <ecNumber>3.4.21.-</ecNumber>
    </recommendedName>
    <alternativeName>
        <fullName>Kallikrein-like protein 3</fullName>
        <shortName>KLK-L3</shortName>
    </alternativeName>
</protein>
<gene>
    <name type="primary">KLK9</name>
</gene>
<evidence type="ECO:0000250" key="1"/>
<evidence type="ECO:0000255" key="2"/>
<evidence type="ECO:0000255" key="3">
    <source>
        <dbReference type="PROSITE-ProRule" id="PRU00274"/>
    </source>
</evidence>
<evidence type="ECO:0000303" key="4">
    <source ref="4"/>
</evidence>
<evidence type="ECO:0000305" key="5"/>
<sequence>MKLGLLCALLSLLAGHGWADTRAIGAEECRPNSQPWQAGLFHLTRLFCGATLISDRWLLTAAHCRKPYLWVRLGEHHLWKWEGPEQLFRVTDFFPHPGFNKDLSANDHNDDIMLIRLPRQARLSPAVQPLNLSQTCVSPGMQCLISGWGAVSSPKALFPVTLQCANISILENKLCHWAYPGHISDSMLCAGLWEGGRGSCQGDSGGPLVCNGTLAGVVSGGAEPCSRPRRPAVYTSVCHYLDWIQEIMEN</sequence>
<feature type="signal peptide" evidence="2">
    <location>
        <begin position="1"/>
        <end position="15"/>
    </location>
</feature>
<feature type="chain" id="PRO_0000027952" description="Kallikrein-9">
    <location>
        <begin position="16"/>
        <end position="250"/>
    </location>
</feature>
<feature type="domain" description="Peptidase S1" evidence="3">
    <location>
        <begin position="23"/>
        <end position="249"/>
    </location>
</feature>
<feature type="active site" description="Charge relay system" evidence="1">
    <location>
        <position position="63"/>
    </location>
</feature>
<feature type="active site" description="Charge relay system" evidence="1">
    <location>
        <position position="111"/>
    </location>
</feature>
<feature type="active site" description="Charge relay system" evidence="1">
    <location>
        <position position="204"/>
    </location>
</feature>
<feature type="glycosylation site" description="N-linked (GlcNAc...) asparagine" evidence="2">
    <location>
        <position position="131"/>
    </location>
</feature>
<feature type="glycosylation site" description="N-linked (GlcNAc...) asparagine" evidence="2">
    <location>
        <position position="166"/>
    </location>
</feature>
<feature type="glycosylation site" description="N-linked (GlcNAc...) asparagine" evidence="2">
    <location>
        <position position="211"/>
    </location>
</feature>
<feature type="disulfide bond" evidence="3">
    <location>
        <begin position="29"/>
        <end position="164"/>
    </location>
</feature>
<feature type="disulfide bond" evidence="3">
    <location>
        <begin position="48"/>
        <end position="64"/>
    </location>
</feature>
<feature type="disulfide bond" evidence="3">
    <location>
        <begin position="136"/>
        <end position="238"/>
    </location>
</feature>
<feature type="disulfide bond" evidence="3">
    <location>
        <begin position="143"/>
        <end position="210"/>
    </location>
</feature>
<feature type="disulfide bond" evidence="3">
    <location>
        <begin position="175"/>
        <end position="189"/>
    </location>
</feature>
<feature type="disulfide bond" evidence="3">
    <location>
        <begin position="200"/>
        <end position="225"/>
    </location>
</feature>
<feature type="splice variant" id="VSP_057044" description="In isoform 2." evidence="4">
    <original>HGWADTRAIGAEECRPNSQPWQAGLFHLTRLFCGATLISDRWLLTA</original>
    <variation>ICGSALESTTSGNGRVRSSCSGLRTSSPTLASTRTSAPMTTMMTSC</variation>
    <location>
        <begin position="16"/>
        <end position="61"/>
    </location>
</feature>
<feature type="splice variant" id="VSP_057045" description="In isoform 2." evidence="4">
    <location>
        <begin position="62"/>
        <end position="250"/>
    </location>
</feature>
<comment type="subcellular location">
    <subcellularLocation>
        <location evidence="5">Secreted</location>
    </subcellularLocation>
</comment>
<comment type="alternative products">
    <event type="alternative splicing"/>
    <isoform>
        <id>Q9UKQ9-1</id>
        <name>1</name>
        <sequence type="displayed"/>
    </isoform>
    <isoform>
        <id>Q9UKQ9-2</id>
        <name>2</name>
        <sequence type="described" ref="VSP_057044 VSP_057045"/>
    </isoform>
</comment>
<comment type="tissue specificity">
    <text>Skin, thymus, trachea, cerebellum and spinal cord.</text>
</comment>
<comment type="similarity">
    <text evidence="3">Belongs to the peptidase S1 family. Kallikrein subfamily.</text>
</comment>
<proteinExistence type="evidence at protein level"/>
<organism>
    <name type="scientific">Homo sapiens</name>
    <name type="common">Human</name>
    <dbReference type="NCBI Taxonomy" id="9606"/>
    <lineage>
        <taxon>Eukaryota</taxon>
        <taxon>Metazoa</taxon>
        <taxon>Chordata</taxon>
        <taxon>Craniata</taxon>
        <taxon>Vertebrata</taxon>
        <taxon>Euteleostomi</taxon>
        <taxon>Mammalia</taxon>
        <taxon>Eutheria</taxon>
        <taxon>Euarchontoglires</taxon>
        <taxon>Primates</taxon>
        <taxon>Haplorrhini</taxon>
        <taxon>Catarrhini</taxon>
        <taxon>Hominidae</taxon>
        <taxon>Homo</taxon>
    </lineage>
</organism>